<sequence length="359" mass="39645">MALGNHSTITEFLLLGLSADPNIRALLFVLFLGIYLLTIMENLMLLLMIRADSCLHKPMYFFLSHLSFVDLCFSSVIVPKMLENLLSQRKTISVEGCLAQVFFVFVTAGTEACLLSGMAYDRHAAICRPLLYGQIMGKQLYMHLVWGSWGLGFLDALINVLLAVNMVFCEAKIIHHYSYEMPSLLPLSCSDISRSLIALLCSTLLHGLGNFLLVFLSYTRIISTILSISSTSGRSKAFSTCSAHLTAVTLYYGSGLLRHLMPNSGSPIELIFSVQYTVVTPMLNSLIYSLKNKEVKGERSLRDSSHLPQLHKGQARWKRPAFTEGRREPGHPELSIPVTPQPQGACACSALRAAPTALP</sequence>
<evidence type="ECO:0000255" key="1"/>
<evidence type="ECO:0000255" key="2">
    <source>
        <dbReference type="PROSITE-ProRule" id="PRU00521"/>
    </source>
</evidence>
<evidence type="ECO:0000256" key="3">
    <source>
        <dbReference type="SAM" id="MobiDB-lite"/>
    </source>
</evidence>
<evidence type="ECO:0000269" key="4">
    <source ref="1"/>
</evidence>
<evidence type="ECO:0000305" key="5"/>
<organism>
    <name type="scientific">Homo sapiens</name>
    <name type="common">Human</name>
    <dbReference type="NCBI Taxonomy" id="9606"/>
    <lineage>
        <taxon>Eukaryota</taxon>
        <taxon>Metazoa</taxon>
        <taxon>Chordata</taxon>
        <taxon>Craniata</taxon>
        <taxon>Vertebrata</taxon>
        <taxon>Euteleostomi</taxon>
        <taxon>Mammalia</taxon>
        <taxon>Eutheria</taxon>
        <taxon>Euarchontoglires</taxon>
        <taxon>Primates</taxon>
        <taxon>Haplorrhini</taxon>
        <taxon>Catarrhini</taxon>
        <taxon>Hominidae</taxon>
        <taxon>Homo</taxon>
    </lineage>
</organism>
<name>OR8S1_HUMAN</name>
<dbReference type="EMBL" id="AB065604">
    <property type="protein sequence ID" value="BAC05832.1"/>
    <property type="molecule type" value="Genomic_DNA"/>
</dbReference>
<dbReference type="EMBL" id="AC089987">
    <property type="status" value="NOT_ANNOTATED_CDS"/>
    <property type="molecule type" value="Genomic_DNA"/>
</dbReference>
<dbReference type="RefSeq" id="NP_001005203.2">
    <property type="nucleotide sequence ID" value="NM_001005203.2"/>
</dbReference>
<dbReference type="SMR" id="Q8NH09"/>
<dbReference type="FunCoup" id="Q8NH09">
    <property type="interactions" value="557"/>
</dbReference>
<dbReference type="STRING" id="9606.ENSP00000310632"/>
<dbReference type="GlyCosmos" id="Q8NH09">
    <property type="glycosylation" value="1 site, No reported glycans"/>
</dbReference>
<dbReference type="GlyGen" id="Q8NH09">
    <property type="glycosylation" value="2 sites"/>
</dbReference>
<dbReference type="iPTMnet" id="Q8NH09"/>
<dbReference type="PhosphoSitePlus" id="Q8NH09"/>
<dbReference type="BioMuta" id="OR8S1"/>
<dbReference type="DMDM" id="296439256"/>
<dbReference type="PaxDb" id="9606-ENSP00000310632"/>
<dbReference type="ProteomicsDB" id="73645"/>
<dbReference type="Antibodypedia" id="78712">
    <property type="antibodies" value="52 antibodies from 17 providers"/>
</dbReference>
<dbReference type="DNASU" id="341568"/>
<dbReference type="UCSC" id="uc010slu.2">
    <property type="organism name" value="human"/>
</dbReference>
<dbReference type="AGR" id="HGNC:19628"/>
<dbReference type="DisGeNET" id="341568"/>
<dbReference type="GeneCards" id="OR8S1"/>
<dbReference type="HGNC" id="HGNC:19628">
    <property type="gene designation" value="OR8S1"/>
</dbReference>
<dbReference type="neXtProt" id="NX_Q8NH09"/>
<dbReference type="PharmGKB" id="PA134896911"/>
<dbReference type="VEuPathDB" id="HostDB:ENSG00000284723"/>
<dbReference type="eggNOG" id="ENOG502SI96">
    <property type="taxonomic scope" value="Eukaryota"/>
</dbReference>
<dbReference type="HOGENOM" id="CLU_012526_5_5_1"/>
<dbReference type="InParanoid" id="Q8NH09"/>
<dbReference type="OrthoDB" id="9035478at2759"/>
<dbReference type="PAN-GO" id="Q8NH09">
    <property type="GO annotations" value="3 GO annotations based on evolutionary models"/>
</dbReference>
<dbReference type="PhylomeDB" id="Q8NH09"/>
<dbReference type="TreeFam" id="TF338386"/>
<dbReference type="PathwayCommons" id="Q8NH09"/>
<dbReference type="Reactome" id="R-HSA-9752946">
    <property type="pathway name" value="Expression and translocation of olfactory receptors"/>
</dbReference>
<dbReference type="SignaLink" id="Q8NH09"/>
<dbReference type="BioGRID-ORCS" id="341568">
    <property type="hits" value="10 hits in 744 CRISPR screens"/>
</dbReference>
<dbReference type="GenomeRNAi" id="341568"/>
<dbReference type="Pharos" id="Q8NH09">
    <property type="development level" value="Tdark"/>
</dbReference>
<dbReference type="PRO" id="PR:Q8NH09"/>
<dbReference type="Proteomes" id="UP000005640">
    <property type="component" value="Chromosome 12"/>
</dbReference>
<dbReference type="RNAct" id="Q8NH09">
    <property type="molecule type" value="protein"/>
</dbReference>
<dbReference type="GO" id="GO:0005886">
    <property type="term" value="C:plasma membrane"/>
    <property type="evidence" value="ECO:0000318"/>
    <property type="project" value="GO_Central"/>
</dbReference>
<dbReference type="GO" id="GO:0004930">
    <property type="term" value="F:G protein-coupled receptor activity"/>
    <property type="evidence" value="ECO:0007669"/>
    <property type="project" value="UniProtKB-KW"/>
</dbReference>
<dbReference type="GO" id="GO:0004984">
    <property type="term" value="F:olfactory receptor activity"/>
    <property type="evidence" value="ECO:0000318"/>
    <property type="project" value="GO_Central"/>
</dbReference>
<dbReference type="GO" id="GO:0007165">
    <property type="term" value="P:signal transduction"/>
    <property type="evidence" value="ECO:0000318"/>
    <property type="project" value="GO_Central"/>
</dbReference>
<dbReference type="CDD" id="cd15229">
    <property type="entry name" value="7tmA_OR8S1-like"/>
    <property type="match status" value="1"/>
</dbReference>
<dbReference type="FunFam" id="1.20.1070.10:FF:000015">
    <property type="entry name" value="Olfactory receptor"/>
    <property type="match status" value="1"/>
</dbReference>
<dbReference type="Gene3D" id="1.20.1070.10">
    <property type="entry name" value="Rhodopsin 7-helix transmembrane proteins"/>
    <property type="match status" value="1"/>
</dbReference>
<dbReference type="InterPro" id="IPR000276">
    <property type="entry name" value="GPCR_Rhodpsn"/>
</dbReference>
<dbReference type="InterPro" id="IPR017452">
    <property type="entry name" value="GPCR_Rhodpsn_7TM"/>
</dbReference>
<dbReference type="InterPro" id="IPR000725">
    <property type="entry name" value="Olfact_rcpt"/>
</dbReference>
<dbReference type="PANTHER" id="PTHR48001">
    <property type="entry name" value="OLFACTORY RECEPTOR"/>
    <property type="match status" value="1"/>
</dbReference>
<dbReference type="Pfam" id="PF13853">
    <property type="entry name" value="7tm_4"/>
    <property type="match status" value="1"/>
</dbReference>
<dbReference type="PRINTS" id="PR00237">
    <property type="entry name" value="GPCRRHODOPSN"/>
</dbReference>
<dbReference type="PRINTS" id="PR00245">
    <property type="entry name" value="OLFACTORYR"/>
</dbReference>
<dbReference type="SUPFAM" id="SSF81321">
    <property type="entry name" value="Family A G protein-coupled receptor-like"/>
    <property type="match status" value="1"/>
</dbReference>
<dbReference type="PROSITE" id="PS00237">
    <property type="entry name" value="G_PROTEIN_RECEP_F1_1"/>
    <property type="match status" value="1"/>
</dbReference>
<dbReference type="PROSITE" id="PS50262">
    <property type="entry name" value="G_PROTEIN_RECEP_F1_2"/>
    <property type="match status" value="1"/>
</dbReference>
<feature type="chain" id="PRO_0000150674" description="Olfactory receptor 8S1">
    <location>
        <begin position="1"/>
        <end position="359"/>
    </location>
</feature>
<feature type="topological domain" description="Extracellular" evidence="1">
    <location>
        <begin position="1"/>
        <end position="25"/>
    </location>
</feature>
<feature type="transmembrane region" description="Helical; Name=1" evidence="1">
    <location>
        <begin position="26"/>
        <end position="46"/>
    </location>
</feature>
<feature type="topological domain" description="Cytoplasmic" evidence="1">
    <location>
        <begin position="47"/>
        <end position="54"/>
    </location>
</feature>
<feature type="transmembrane region" description="Helical; Name=2" evidence="1">
    <location>
        <begin position="55"/>
        <end position="75"/>
    </location>
</feature>
<feature type="topological domain" description="Extracellular" evidence="1">
    <location>
        <begin position="76"/>
        <end position="99"/>
    </location>
</feature>
<feature type="transmembrane region" description="Helical; Name=3" evidence="1">
    <location>
        <begin position="100"/>
        <end position="120"/>
    </location>
</feature>
<feature type="topological domain" description="Cytoplasmic" evidence="1">
    <location>
        <begin position="121"/>
        <end position="139"/>
    </location>
</feature>
<feature type="transmembrane region" description="Helical; Name=4" evidence="1">
    <location>
        <begin position="140"/>
        <end position="160"/>
    </location>
</feature>
<feature type="topological domain" description="Extracellular" evidence="1">
    <location>
        <begin position="161"/>
        <end position="197"/>
    </location>
</feature>
<feature type="transmembrane region" description="Helical; Name=5" evidence="1">
    <location>
        <begin position="198"/>
        <end position="217"/>
    </location>
</feature>
<feature type="topological domain" description="Cytoplasmic" evidence="1">
    <location>
        <begin position="218"/>
        <end position="237"/>
    </location>
</feature>
<feature type="transmembrane region" description="Helical; Name=6" evidence="1">
    <location>
        <begin position="238"/>
        <end position="258"/>
    </location>
</feature>
<feature type="topological domain" description="Extracellular" evidence="1">
    <location>
        <begin position="259"/>
        <end position="269"/>
    </location>
</feature>
<feature type="transmembrane region" description="Helical; Name=7" evidence="1">
    <location>
        <begin position="270"/>
        <end position="290"/>
    </location>
</feature>
<feature type="topological domain" description="Cytoplasmic" evidence="1">
    <location>
        <begin position="291"/>
        <end position="359"/>
    </location>
</feature>
<feature type="region of interest" description="Disordered" evidence="3">
    <location>
        <begin position="301"/>
        <end position="338"/>
    </location>
</feature>
<feature type="glycosylation site" description="N-linked (GlcNAc...) asparagine" evidence="1">
    <location>
        <position position="5"/>
    </location>
</feature>
<feature type="disulfide bond" evidence="2">
    <location>
        <begin position="97"/>
        <end position="189"/>
    </location>
</feature>
<feature type="sequence variant" id="VAR_034275" description="In dbSNP:rs2731073." evidence="4">
    <original>M</original>
    <variation>V</variation>
    <location>
        <position position="48"/>
    </location>
</feature>
<feature type="sequence variant" id="VAR_057566" description="In dbSNP:rs4075258.">
    <original>L</original>
    <variation>P</variation>
    <location>
        <position position="82"/>
    </location>
</feature>
<feature type="sequence variant" id="VAR_057567" description="In dbSNP:rs12425460.">
    <original>R</original>
    <variation>C</variation>
    <location>
        <position position="128"/>
    </location>
</feature>
<feature type="sequence conflict" description="In Ref. 1; BAC05832." evidence="5" ref="1">
    <original>C</original>
    <variation>R</variation>
    <location>
        <position position="127"/>
    </location>
</feature>
<feature type="sequence conflict" description="In Ref. 1; BAC05832." evidence="5" ref="1">
    <original>A</original>
    <variation>V</variation>
    <location>
        <position position="198"/>
    </location>
</feature>
<proteinExistence type="inferred from homology"/>
<comment type="function">
    <text evidence="5">Odorant receptor.</text>
</comment>
<comment type="subcellular location">
    <subcellularLocation>
        <location>Cell membrane</location>
        <topology>Multi-pass membrane protein</topology>
    </subcellularLocation>
</comment>
<comment type="similarity">
    <text evidence="2">Belongs to the G-protein coupled receptor 1 family.</text>
</comment>
<comment type="online information" name="Human Olfactory Receptor Data Exploratorium (HORDE)">
    <link uri="http://genome.weizmann.ac.il/horde/card/index/symbol:OR8S1"/>
</comment>
<gene>
    <name type="primary">OR8S1</name>
</gene>
<accession>Q8NH09</accession>
<protein>
    <recommendedName>
        <fullName>Olfactory receptor 8S1</fullName>
    </recommendedName>
</protein>
<reference key="1">
    <citation type="submission" date="2001-07" db="EMBL/GenBank/DDBJ databases">
        <title>Genome-wide discovery and analysis of human seven transmembrane helix receptor genes.</title>
        <authorList>
            <person name="Suwa M."/>
            <person name="Sato T."/>
            <person name="Okouchi I."/>
            <person name="Arita M."/>
            <person name="Futami K."/>
            <person name="Matsumoto S."/>
            <person name="Tsutsumi S."/>
            <person name="Aburatani H."/>
            <person name="Asai K."/>
            <person name="Akiyama Y."/>
        </authorList>
    </citation>
    <scope>NUCLEOTIDE SEQUENCE [GENOMIC DNA]</scope>
    <scope>VARIANT VAL-48</scope>
</reference>
<reference key="2">
    <citation type="journal article" date="2006" name="Nature">
        <title>The finished DNA sequence of human chromosome 12.</title>
        <authorList>
            <person name="Scherer S.E."/>
            <person name="Muzny D.M."/>
            <person name="Buhay C.J."/>
            <person name="Chen R."/>
            <person name="Cree A."/>
            <person name="Ding Y."/>
            <person name="Dugan-Rocha S."/>
            <person name="Gill R."/>
            <person name="Gunaratne P."/>
            <person name="Harris R.A."/>
            <person name="Hawes A.C."/>
            <person name="Hernandez J."/>
            <person name="Hodgson A.V."/>
            <person name="Hume J."/>
            <person name="Jackson A."/>
            <person name="Khan Z.M."/>
            <person name="Kovar-Smith C."/>
            <person name="Lewis L.R."/>
            <person name="Lozado R.J."/>
            <person name="Metzker M.L."/>
            <person name="Milosavljevic A."/>
            <person name="Miner G.R."/>
            <person name="Montgomery K.T."/>
            <person name="Morgan M.B."/>
            <person name="Nazareth L.V."/>
            <person name="Scott G."/>
            <person name="Sodergren E."/>
            <person name="Song X.-Z."/>
            <person name="Steffen D."/>
            <person name="Lovering R.C."/>
            <person name="Wheeler D.A."/>
            <person name="Worley K.C."/>
            <person name="Yuan Y."/>
            <person name="Zhang Z."/>
            <person name="Adams C.Q."/>
            <person name="Ansari-Lari M.A."/>
            <person name="Ayele M."/>
            <person name="Brown M.J."/>
            <person name="Chen G."/>
            <person name="Chen Z."/>
            <person name="Clerc-Blankenburg K.P."/>
            <person name="Davis C."/>
            <person name="Delgado O."/>
            <person name="Dinh H.H."/>
            <person name="Draper H."/>
            <person name="Gonzalez-Garay M.L."/>
            <person name="Havlak P."/>
            <person name="Jackson L.R."/>
            <person name="Jacob L.S."/>
            <person name="Kelly S.H."/>
            <person name="Li L."/>
            <person name="Li Z."/>
            <person name="Liu J."/>
            <person name="Liu W."/>
            <person name="Lu J."/>
            <person name="Maheshwari M."/>
            <person name="Nguyen B.-V."/>
            <person name="Okwuonu G.O."/>
            <person name="Pasternak S."/>
            <person name="Perez L.M."/>
            <person name="Plopper F.J.H."/>
            <person name="Santibanez J."/>
            <person name="Shen H."/>
            <person name="Tabor P.E."/>
            <person name="Verduzco D."/>
            <person name="Waldron L."/>
            <person name="Wang Q."/>
            <person name="Williams G.A."/>
            <person name="Zhang J."/>
            <person name="Zhou J."/>
            <person name="Allen C.C."/>
            <person name="Amin A.G."/>
            <person name="Anyalebechi V."/>
            <person name="Bailey M."/>
            <person name="Barbaria J.A."/>
            <person name="Bimage K.E."/>
            <person name="Bryant N.P."/>
            <person name="Burch P.E."/>
            <person name="Burkett C.E."/>
            <person name="Burrell K.L."/>
            <person name="Calderon E."/>
            <person name="Cardenas V."/>
            <person name="Carter K."/>
            <person name="Casias K."/>
            <person name="Cavazos I."/>
            <person name="Cavazos S.R."/>
            <person name="Ceasar H."/>
            <person name="Chacko J."/>
            <person name="Chan S.N."/>
            <person name="Chavez D."/>
            <person name="Christopoulos C."/>
            <person name="Chu J."/>
            <person name="Cockrell R."/>
            <person name="Cox C.D."/>
            <person name="Dang M."/>
            <person name="Dathorne S.R."/>
            <person name="David R."/>
            <person name="Davis C.M."/>
            <person name="Davy-Carroll L."/>
            <person name="Deshazo D.R."/>
            <person name="Donlin J.E."/>
            <person name="D'Souza L."/>
            <person name="Eaves K.A."/>
            <person name="Egan A."/>
            <person name="Emery-Cohen A.J."/>
            <person name="Escotto M."/>
            <person name="Flagg N."/>
            <person name="Forbes L.D."/>
            <person name="Gabisi A.M."/>
            <person name="Garza M."/>
            <person name="Hamilton C."/>
            <person name="Henderson N."/>
            <person name="Hernandez O."/>
            <person name="Hines S."/>
            <person name="Hogues M.E."/>
            <person name="Huang M."/>
            <person name="Idlebird D.G."/>
            <person name="Johnson R."/>
            <person name="Jolivet A."/>
            <person name="Jones S."/>
            <person name="Kagan R."/>
            <person name="King L.M."/>
            <person name="Leal B."/>
            <person name="Lebow H."/>
            <person name="Lee S."/>
            <person name="LeVan J.M."/>
            <person name="Lewis L.C."/>
            <person name="London P."/>
            <person name="Lorensuhewa L.M."/>
            <person name="Loulseged H."/>
            <person name="Lovett D.A."/>
            <person name="Lucier A."/>
            <person name="Lucier R.L."/>
            <person name="Ma J."/>
            <person name="Madu R.C."/>
            <person name="Mapua P."/>
            <person name="Martindale A.D."/>
            <person name="Martinez E."/>
            <person name="Massey E."/>
            <person name="Mawhiney S."/>
            <person name="Meador M.G."/>
            <person name="Mendez S."/>
            <person name="Mercado C."/>
            <person name="Mercado I.C."/>
            <person name="Merritt C.E."/>
            <person name="Miner Z.L."/>
            <person name="Minja E."/>
            <person name="Mitchell T."/>
            <person name="Mohabbat F."/>
            <person name="Mohabbat K."/>
            <person name="Montgomery B."/>
            <person name="Moore N."/>
            <person name="Morris S."/>
            <person name="Munidasa M."/>
            <person name="Ngo R.N."/>
            <person name="Nguyen N.B."/>
            <person name="Nickerson E."/>
            <person name="Nwaokelemeh O.O."/>
            <person name="Nwokenkwo S."/>
            <person name="Obregon M."/>
            <person name="Oguh M."/>
            <person name="Oragunye N."/>
            <person name="Oviedo R.J."/>
            <person name="Parish B.J."/>
            <person name="Parker D.N."/>
            <person name="Parrish J."/>
            <person name="Parks K.L."/>
            <person name="Paul H.A."/>
            <person name="Payton B.A."/>
            <person name="Perez A."/>
            <person name="Perrin W."/>
            <person name="Pickens A."/>
            <person name="Primus E.L."/>
            <person name="Pu L.-L."/>
            <person name="Puazo M."/>
            <person name="Quiles M.M."/>
            <person name="Quiroz J.B."/>
            <person name="Rabata D."/>
            <person name="Reeves K."/>
            <person name="Ruiz S.J."/>
            <person name="Shao H."/>
            <person name="Sisson I."/>
            <person name="Sonaike T."/>
            <person name="Sorelle R.P."/>
            <person name="Sutton A.E."/>
            <person name="Svatek A.F."/>
            <person name="Svetz L.A."/>
            <person name="Tamerisa K.S."/>
            <person name="Taylor T.R."/>
            <person name="Teague B."/>
            <person name="Thomas N."/>
            <person name="Thorn R.D."/>
            <person name="Trejos Z.Y."/>
            <person name="Trevino B.K."/>
            <person name="Ukegbu O.N."/>
            <person name="Urban J.B."/>
            <person name="Vasquez L.I."/>
            <person name="Vera V.A."/>
            <person name="Villasana D.M."/>
            <person name="Wang L."/>
            <person name="Ward-Moore S."/>
            <person name="Warren J.T."/>
            <person name="Wei X."/>
            <person name="White F."/>
            <person name="Williamson A.L."/>
            <person name="Wleczyk R."/>
            <person name="Wooden H.S."/>
            <person name="Wooden S.H."/>
            <person name="Yen J."/>
            <person name="Yoon L."/>
            <person name="Yoon V."/>
            <person name="Zorrilla S.E."/>
            <person name="Nelson D."/>
            <person name="Kucherlapati R."/>
            <person name="Weinstock G."/>
            <person name="Gibbs R.A."/>
        </authorList>
    </citation>
    <scope>NUCLEOTIDE SEQUENCE [LARGE SCALE GENOMIC DNA]</scope>
</reference>
<keyword id="KW-1003">Cell membrane</keyword>
<keyword id="KW-1015">Disulfide bond</keyword>
<keyword id="KW-0297">G-protein coupled receptor</keyword>
<keyword id="KW-0325">Glycoprotein</keyword>
<keyword id="KW-0472">Membrane</keyword>
<keyword id="KW-0552">Olfaction</keyword>
<keyword id="KW-0675">Receptor</keyword>
<keyword id="KW-1185">Reference proteome</keyword>
<keyword id="KW-0716">Sensory transduction</keyword>
<keyword id="KW-0807">Transducer</keyword>
<keyword id="KW-0812">Transmembrane</keyword>
<keyword id="KW-1133">Transmembrane helix</keyword>